<feature type="initiator methionine" description="Removed" evidence="5">
    <location>
        <position position="1"/>
    </location>
</feature>
<feature type="chain" id="PRO_0000203263" description="DNA repair protein RAD33">
    <location>
        <begin position="2"/>
        <end position="177"/>
    </location>
</feature>
<feature type="modified residue" description="N-acetylserine" evidence="5">
    <location>
        <position position="2"/>
    </location>
</feature>
<feature type="cross-link" description="Glycyl lysine isopeptide (Lys-Gly) (interchain with G-Cter in ubiquitin)" evidence="4">
    <location>
        <position position="19"/>
    </location>
</feature>
<proteinExistence type="evidence at protein level"/>
<gene>
    <name type="primary">RAD33</name>
    <name type="ordered locus">YML011C</name>
    <name type="ORF">YM9571.07C</name>
</gene>
<dbReference type="EMBL" id="Z49810">
    <property type="protein sequence ID" value="CAA89941.1"/>
    <property type="molecule type" value="Genomic_DNA"/>
</dbReference>
<dbReference type="EMBL" id="BK006946">
    <property type="protein sequence ID" value="DAA09887.1"/>
    <property type="molecule type" value="Genomic_DNA"/>
</dbReference>
<dbReference type="PIR" id="S55108">
    <property type="entry name" value="S55108"/>
</dbReference>
<dbReference type="RefSeq" id="NP_013702.1">
    <property type="nucleotide sequence ID" value="NM_001182368.1"/>
</dbReference>
<dbReference type="PDB" id="7K04">
    <property type="method" value="EM"/>
    <property type="resolution" value="9.25 A"/>
    <property type="chains" value="E=1-177"/>
</dbReference>
<dbReference type="PDB" id="7M2U">
    <property type="method" value="EM"/>
    <property type="resolution" value="8.20 A"/>
    <property type="chains" value="E=1-177"/>
</dbReference>
<dbReference type="PDBsum" id="7K04"/>
<dbReference type="PDBsum" id="7M2U"/>
<dbReference type="EMDB" id="EMD-22588"/>
<dbReference type="EMDB" id="EMD-6496"/>
<dbReference type="SMR" id="Q04231"/>
<dbReference type="BioGRID" id="35158">
    <property type="interactions" value="47"/>
</dbReference>
<dbReference type="DIP" id="DIP-2124N"/>
<dbReference type="FunCoup" id="Q04231">
    <property type="interactions" value="39"/>
</dbReference>
<dbReference type="IntAct" id="Q04231">
    <property type="interactions" value="6"/>
</dbReference>
<dbReference type="MINT" id="Q04231"/>
<dbReference type="STRING" id="4932.YML011C"/>
<dbReference type="iPTMnet" id="Q04231"/>
<dbReference type="PaxDb" id="4932-YML011C"/>
<dbReference type="PeptideAtlas" id="Q04231"/>
<dbReference type="EnsemblFungi" id="YML011C_mRNA">
    <property type="protein sequence ID" value="YML011C"/>
    <property type="gene ID" value="YML011C"/>
</dbReference>
<dbReference type="GeneID" id="854998"/>
<dbReference type="KEGG" id="sce:YML011C"/>
<dbReference type="AGR" id="SGD:S000004472"/>
<dbReference type="SGD" id="S000004472">
    <property type="gene designation" value="RAD33"/>
</dbReference>
<dbReference type="VEuPathDB" id="FungiDB:YML011C"/>
<dbReference type="eggNOG" id="ENOG502RZDT">
    <property type="taxonomic scope" value="Eukaryota"/>
</dbReference>
<dbReference type="HOGENOM" id="CLU_117800_1_0_1"/>
<dbReference type="InParanoid" id="Q04231"/>
<dbReference type="OMA" id="EMISCAT"/>
<dbReference type="OrthoDB" id="4085867at2759"/>
<dbReference type="BioCyc" id="YEAST:G3O-32615-MONOMER"/>
<dbReference type="BioGRID-ORCS" id="854998">
    <property type="hits" value="0 hits in 10 CRISPR screens"/>
</dbReference>
<dbReference type="PRO" id="PR:Q04231"/>
<dbReference type="Proteomes" id="UP000002311">
    <property type="component" value="Chromosome XIII"/>
</dbReference>
<dbReference type="RNAct" id="Q04231">
    <property type="molecule type" value="protein"/>
</dbReference>
<dbReference type="GO" id="GO:0005634">
    <property type="term" value="C:nucleus"/>
    <property type="evidence" value="ECO:0007005"/>
    <property type="project" value="SGD"/>
</dbReference>
<dbReference type="GO" id="GO:0006289">
    <property type="term" value="P:nucleotide-excision repair"/>
    <property type="evidence" value="ECO:0000315"/>
    <property type="project" value="SGD"/>
</dbReference>
<dbReference type="InterPro" id="IPR014841">
    <property type="entry name" value="Rad33"/>
</dbReference>
<dbReference type="Pfam" id="PF08730">
    <property type="entry name" value="Rad33"/>
    <property type="match status" value="1"/>
</dbReference>
<accession>Q04231</accession>
<accession>D6VZG3</accession>
<organism>
    <name type="scientific">Saccharomyces cerevisiae (strain ATCC 204508 / S288c)</name>
    <name type="common">Baker's yeast</name>
    <dbReference type="NCBI Taxonomy" id="559292"/>
    <lineage>
        <taxon>Eukaryota</taxon>
        <taxon>Fungi</taxon>
        <taxon>Dikarya</taxon>
        <taxon>Ascomycota</taxon>
        <taxon>Saccharomycotina</taxon>
        <taxon>Saccharomycetes</taxon>
        <taxon>Saccharomycetales</taxon>
        <taxon>Saccharomycetaceae</taxon>
        <taxon>Saccharomyces</taxon>
    </lineage>
</organism>
<keyword id="KW-0002">3D-structure</keyword>
<keyword id="KW-0007">Acetylation</keyword>
<keyword id="KW-0227">DNA damage</keyword>
<keyword id="KW-0234">DNA repair</keyword>
<keyword id="KW-1017">Isopeptide bond</keyword>
<keyword id="KW-0539">Nucleus</keyword>
<keyword id="KW-1185">Reference proteome</keyword>
<keyword id="KW-0832">Ubl conjugation</keyword>
<protein>
    <recommendedName>
        <fullName>DNA repair protein RAD33</fullName>
    </recommendedName>
</protein>
<evidence type="ECO:0000269" key="1">
    <source>
    </source>
</evidence>
<evidence type="ECO:0000269" key="2">
    <source>
    </source>
</evidence>
<evidence type="ECO:0000269" key="3">
    <source>
    </source>
</evidence>
<evidence type="ECO:0007744" key="4">
    <source>
    </source>
</evidence>
<evidence type="ECO:0007744" key="5">
    <source>
    </source>
</evidence>
<comment type="function">
    <text evidence="3">Involved in nucleotide excision repair (NER) of damaged DNA. Required for the repair of RNA polymerase I-transcribed rDNA and RNA polymerase II-transcribed DNA regions. May have a role in stabilizing the DNA repair proteins RAD4 and RAD34.</text>
</comment>
<comment type="subcellular location">
    <subcellularLocation>
        <location evidence="1">Nucleus</location>
    </subcellularLocation>
</comment>
<comment type="miscellaneous">
    <text evidence="2">Present with 1080 molecules/cell in log phase SD medium.</text>
</comment>
<name>RAD33_YEAST</name>
<reference key="1">
    <citation type="journal article" date="1997" name="Nature">
        <title>The nucleotide sequence of Saccharomyces cerevisiae chromosome XIII.</title>
        <authorList>
            <person name="Bowman S."/>
            <person name="Churcher C.M."/>
            <person name="Badcock K."/>
            <person name="Brown D."/>
            <person name="Chillingworth T."/>
            <person name="Connor R."/>
            <person name="Dedman K."/>
            <person name="Devlin K."/>
            <person name="Gentles S."/>
            <person name="Hamlin N."/>
            <person name="Hunt S."/>
            <person name="Jagels K."/>
            <person name="Lye G."/>
            <person name="Moule S."/>
            <person name="Odell C."/>
            <person name="Pearson D."/>
            <person name="Rajandream M.A."/>
            <person name="Rice P."/>
            <person name="Skelton J."/>
            <person name="Walsh S.V."/>
            <person name="Whitehead S."/>
            <person name="Barrell B.G."/>
        </authorList>
    </citation>
    <scope>NUCLEOTIDE SEQUENCE [LARGE SCALE GENOMIC DNA]</scope>
    <source>
        <strain>ATCC 204508 / S288c</strain>
    </source>
</reference>
<reference key="2">
    <citation type="journal article" date="2014" name="G3 (Bethesda)">
        <title>The reference genome sequence of Saccharomyces cerevisiae: Then and now.</title>
        <authorList>
            <person name="Engel S.R."/>
            <person name="Dietrich F.S."/>
            <person name="Fisk D.G."/>
            <person name="Binkley G."/>
            <person name="Balakrishnan R."/>
            <person name="Costanzo M.C."/>
            <person name="Dwight S.S."/>
            <person name="Hitz B.C."/>
            <person name="Karra K."/>
            <person name="Nash R.S."/>
            <person name="Weng S."/>
            <person name="Wong E.D."/>
            <person name="Lloyd P."/>
            <person name="Skrzypek M.S."/>
            <person name="Miyasato S.R."/>
            <person name="Simison M."/>
            <person name="Cherry J.M."/>
        </authorList>
    </citation>
    <scope>GENOME REANNOTATION</scope>
    <source>
        <strain>ATCC 204508 / S288c</strain>
    </source>
</reference>
<reference key="3">
    <citation type="journal article" date="2003" name="Nature">
        <title>Global analysis of protein localization in budding yeast.</title>
        <authorList>
            <person name="Huh W.-K."/>
            <person name="Falvo J.V."/>
            <person name="Gerke L.C."/>
            <person name="Carroll A.S."/>
            <person name="Howson R.W."/>
            <person name="Weissman J.S."/>
            <person name="O'Shea E.K."/>
        </authorList>
    </citation>
    <scope>SUBCELLULAR LOCATION [LARGE SCALE ANALYSIS]</scope>
</reference>
<reference key="4">
    <citation type="journal article" date="2003" name="Nature">
        <title>Global analysis of protein expression in yeast.</title>
        <authorList>
            <person name="Ghaemmaghami S."/>
            <person name="Huh W.-K."/>
            <person name="Bower K."/>
            <person name="Howson R.W."/>
            <person name="Belle A."/>
            <person name="Dephoure N."/>
            <person name="O'Shea E.K."/>
            <person name="Weissman J.S."/>
        </authorList>
    </citation>
    <scope>LEVEL OF PROTEIN EXPRESSION [LARGE SCALE ANALYSIS]</scope>
</reference>
<reference key="5">
    <citation type="journal article" date="2006" name="DNA Repair">
        <title>Rad33, a new factor involved in nucleotide excision repair in Saccharomyces cerevisiae.</title>
        <authorList>
            <person name="den Dulk B."/>
            <person name="Sun S.M."/>
            <person name="de Ruijter M."/>
            <person name="Brandsma J.A."/>
            <person name="Brouwer J."/>
        </authorList>
    </citation>
    <scope>FUNCTION</scope>
</reference>
<reference key="6">
    <citation type="journal article" date="2012" name="Proc. Natl. Acad. Sci. U.S.A.">
        <title>N-terminal acetylome analyses and functional insights of the N-terminal acetyltransferase NatB.</title>
        <authorList>
            <person name="Van Damme P."/>
            <person name="Lasa M."/>
            <person name="Polevoda B."/>
            <person name="Gazquez C."/>
            <person name="Elosegui-Artola A."/>
            <person name="Kim D.S."/>
            <person name="De Juan-Pardo E."/>
            <person name="Demeyer K."/>
            <person name="Hole K."/>
            <person name="Larrea E."/>
            <person name="Timmerman E."/>
            <person name="Prieto J."/>
            <person name="Arnesen T."/>
            <person name="Sherman F."/>
            <person name="Gevaert K."/>
            <person name="Aldabe R."/>
        </authorList>
    </citation>
    <scope>ACETYLATION [LARGE SCALE ANALYSIS] AT SER-2</scope>
    <scope>CLEAVAGE OF INITIATOR METHIONINE [LARGE SCALE ANALYSIS]</scope>
    <scope>IDENTIFICATION BY MASS SPECTROMETRY [LARGE SCALE ANALYSIS]</scope>
</reference>
<reference key="7">
    <citation type="journal article" date="2012" name="Proteomics">
        <title>Sites of ubiquitin attachment in Saccharomyces cerevisiae.</title>
        <authorList>
            <person name="Starita L.M."/>
            <person name="Lo R.S."/>
            <person name="Eng J.K."/>
            <person name="von Haller P.D."/>
            <person name="Fields S."/>
        </authorList>
    </citation>
    <scope>UBIQUITINATION [LARGE SCALE ANALYSIS] AT LYS-19</scope>
    <scope>IDENTIFICATION BY MASS SPECTROMETRY [LARGE SCALE ANALYSIS]</scope>
</reference>
<sequence>MSKSTNVSYERVELFENPKVPIEVEDEILEKYAESSLDHDMTVNELPRFFKDLQLEPTIWKLVRNEDVIIEGTDVIDFTKLVRCTCQLLILMNNLTVIDDLWSMLIRNCGRDVDFPQVALRDHVLSVKDLQKISNLIGADQSSGTIEMISCATDGKRLFMTYLDFGCVLGKLGYLKM</sequence>